<proteinExistence type="inferred from homology"/>
<organism>
    <name type="scientific">Burkholderia mallei (strain ATCC 23344)</name>
    <dbReference type="NCBI Taxonomy" id="243160"/>
    <lineage>
        <taxon>Bacteria</taxon>
        <taxon>Pseudomonadati</taxon>
        <taxon>Pseudomonadota</taxon>
        <taxon>Betaproteobacteria</taxon>
        <taxon>Burkholderiales</taxon>
        <taxon>Burkholderiaceae</taxon>
        <taxon>Burkholderia</taxon>
        <taxon>pseudomallei group</taxon>
    </lineage>
</organism>
<comment type="function">
    <text evidence="1">Channel that opens in response to stretch forces in the membrane lipid bilayer. May participate in the regulation of osmotic pressure changes within the cell.</text>
</comment>
<comment type="subunit">
    <text evidence="1">Homopentamer.</text>
</comment>
<comment type="subcellular location">
    <subcellularLocation>
        <location evidence="1">Cell inner membrane</location>
        <topology evidence="1">Multi-pass membrane protein</topology>
    </subcellularLocation>
</comment>
<comment type="similarity">
    <text evidence="1">Belongs to the MscL family.</text>
</comment>
<name>MSCL_BURMA</name>
<feature type="chain" id="PRO_0000237986" description="Large-conductance mechanosensitive channel">
    <location>
        <begin position="1"/>
        <end position="143"/>
    </location>
</feature>
<feature type="transmembrane region" description="Helical" evidence="1">
    <location>
        <begin position="10"/>
        <end position="30"/>
    </location>
</feature>
<feature type="transmembrane region" description="Helical" evidence="1">
    <location>
        <begin position="89"/>
        <end position="109"/>
    </location>
</feature>
<evidence type="ECO:0000255" key="1">
    <source>
        <dbReference type="HAMAP-Rule" id="MF_00115"/>
    </source>
</evidence>
<gene>
    <name evidence="1" type="primary">mscL</name>
    <name type="ordered locus">BMA1501</name>
</gene>
<protein>
    <recommendedName>
        <fullName evidence="1">Large-conductance mechanosensitive channel</fullName>
    </recommendedName>
</protein>
<dbReference type="EMBL" id="CP000010">
    <property type="protein sequence ID" value="AAU47709.1"/>
    <property type="molecule type" value="Genomic_DNA"/>
</dbReference>
<dbReference type="RefSeq" id="WP_004192898.1">
    <property type="nucleotide sequence ID" value="NC_006348.1"/>
</dbReference>
<dbReference type="RefSeq" id="YP_103145.1">
    <property type="nucleotide sequence ID" value="NC_006348.1"/>
</dbReference>
<dbReference type="SMR" id="Q62JH4"/>
<dbReference type="GeneID" id="93060637"/>
<dbReference type="KEGG" id="bma:BMA1501"/>
<dbReference type="PATRIC" id="fig|243160.12.peg.1545"/>
<dbReference type="eggNOG" id="COG1970">
    <property type="taxonomic scope" value="Bacteria"/>
</dbReference>
<dbReference type="HOGENOM" id="CLU_095787_0_1_4"/>
<dbReference type="Proteomes" id="UP000006693">
    <property type="component" value="Chromosome 1"/>
</dbReference>
<dbReference type="GO" id="GO:0005886">
    <property type="term" value="C:plasma membrane"/>
    <property type="evidence" value="ECO:0007669"/>
    <property type="project" value="UniProtKB-SubCell"/>
</dbReference>
<dbReference type="GO" id="GO:0008381">
    <property type="term" value="F:mechanosensitive monoatomic ion channel activity"/>
    <property type="evidence" value="ECO:0007669"/>
    <property type="project" value="UniProtKB-UniRule"/>
</dbReference>
<dbReference type="Gene3D" id="1.10.1200.120">
    <property type="entry name" value="Large-conductance mechanosensitive channel, MscL, domain 1"/>
    <property type="match status" value="1"/>
</dbReference>
<dbReference type="HAMAP" id="MF_00115">
    <property type="entry name" value="MscL"/>
    <property type="match status" value="1"/>
</dbReference>
<dbReference type="InterPro" id="IPR019823">
    <property type="entry name" value="Mechanosensitive_channel_CS"/>
</dbReference>
<dbReference type="InterPro" id="IPR001185">
    <property type="entry name" value="MS_channel"/>
</dbReference>
<dbReference type="InterPro" id="IPR037673">
    <property type="entry name" value="MSC/AndL"/>
</dbReference>
<dbReference type="InterPro" id="IPR036019">
    <property type="entry name" value="MscL_channel"/>
</dbReference>
<dbReference type="NCBIfam" id="TIGR00220">
    <property type="entry name" value="mscL"/>
    <property type="match status" value="1"/>
</dbReference>
<dbReference type="NCBIfam" id="NF001843">
    <property type="entry name" value="PRK00567.1-4"/>
    <property type="match status" value="1"/>
</dbReference>
<dbReference type="NCBIfam" id="NF010557">
    <property type="entry name" value="PRK13952.1"/>
    <property type="match status" value="1"/>
</dbReference>
<dbReference type="PANTHER" id="PTHR30266:SF2">
    <property type="entry name" value="LARGE-CONDUCTANCE MECHANOSENSITIVE CHANNEL"/>
    <property type="match status" value="1"/>
</dbReference>
<dbReference type="PANTHER" id="PTHR30266">
    <property type="entry name" value="MECHANOSENSITIVE CHANNEL MSCL"/>
    <property type="match status" value="1"/>
</dbReference>
<dbReference type="Pfam" id="PF01741">
    <property type="entry name" value="MscL"/>
    <property type="match status" value="1"/>
</dbReference>
<dbReference type="PRINTS" id="PR01264">
    <property type="entry name" value="MECHCHANNEL"/>
</dbReference>
<dbReference type="SUPFAM" id="SSF81330">
    <property type="entry name" value="Gated mechanosensitive channel"/>
    <property type="match status" value="1"/>
</dbReference>
<dbReference type="PROSITE" id="PS01327">
    <property type="entry name" value="MSCL"/>
    <property type="match status" value="1"/>
</dbReference>
<accession>Q62JH4</accession>
<sequence length="143" mass="15578">MSIIKEFKEFAVKGNVMDLAIGVIIGGAFSKIVDSVVKDLIMPVIGVLTGGLDFSNKFVLLGQIPASFKGNPESFKDLQAAGVATFGYGSFITVLINFIILAFIIFLMVKFINKLRKPEEAAPAATPEDVLLLREIRDSLKQR</sequence>
<keyword id="KW-0997">Cell inner membrane</keyword>
<keyword id="KW-1003">Cell membrane</keyword>
<keyword id="KW-0407">Ion channel</keyword>
<keyword id="KW-0406">Ion transport</keyword>
<keyword id="KW-0472">Membrane</keyword>
<keyword id="KW-1185">Reference proteome</keyword>
<keyword id="KW-0812">Transmembrane</keyword>
<keyword id="KW-1133">Transmembrane helix</keyword>
<keyword id="KW-0813">Transport</keyword>
<reference key="1">
    <citation type="journal article" date="2004" name="Proc. Natl. Acad. Sci. U.S.A.">
        <title>Structural flexibility in the Burkholderia mallei genome.</title>
        <authorList>
            <person name="Nierman W.C."/>
            <person name="DeShazer D."/>
            <person name="Kim H.S."/>
            <person name="Tettelin H."/>
            <person name="Nelson K.E."/>
            <person name="Feldblyum T.V."/>
            <person name="Ulrich R.L."/>
            <person name="Ronning C.M."/>
            <person name="Brinkac L.M."/>
            <person name="Daugherty S.C."/>
            <person name="Davidsen T.D."/>
            <person name="DeBoy R.T."/>
            <person name="Dimitrov G."/>
            <person name="Dodson R.J."/>
            <person name="Durkin A.S."/>
            <person name="Gwinn M.L."/>
            <person name="Haft D.H."/>
            <person name="Khouri H.M."/>
            <person name="Kolonay J.F."/>
            <person name="Madupu R."/>
            <person name="Mohammoud Y."/>
            <person name="Nelson W.C."/>
            <person name="Radune D."/>
            <person name="Romero C.M."/>
            <person name="Sarria S."/>
            <person name="Selengut J."/>
            <person name="Shamblin C."/>
            <person name="Sullivan S.A."/>
            <person name="White O."/>
            <person name="Yu Y."/>
            <person name="Zafar N."/>
            <person name="Zhou L."/>
            <person name="Fraser C.M."/>
        </authorList>
    </citation>
    <scope>NUCLEOTIDE SEQUENCE [LARGE SCALE GENOMIC DNA]</scope>
    <source>
        <strain>ATCC 23344</strain>
    </source>
</reference>